<comment type="function">
    <text evidence="1">One of the proteins required for the normal export of preproteins out of the cell cytoplasm. It is a molecular chaperone that binds to a subset of precursor proteins, maintaining them in a translocation-competent state. It also specifically binds to its receptor SecA.</text>
</comment>
<comment type="subunit">
    <text evidence="1">Homotetramer, a dimer of dimers. One homotetramer interacts with 1 SecA dimer.</text>
</comment>
<comment type="subcellular location">
    <subcellularLocation>
        <location evidence="1">Cytoplasm</location>
    </subcellularLocation>
</comment>
<comment type="similarity">
    <text evidence="1">Belongs to the SecB family.</text>
</comment>
<feature type="chain" id="PRO_1000148697" description="Protein-export protein SecB">
    <location>
        <begin position="1"/>
        <end position="142"/>
    </location>
</feature>
<protein>
    <recommendedName>
        <fullName evidence="1">Protein-export protein SecB</fullName>
    </recommendedName>
</protein>
<organism>
    <name type="scientific">Buchnera aphidicola subsp. Acyrthosiphon pisum (strain Tuc7)</name>
    <dbReference type="NCBI Taxonomy" id="561501"/>
    <lineage>
        <taxon>Bacteria</taxon>
        <taxon>Pseudomonadati</taxon>
        <taxon>Pseudomonadota</taxon>
        <taxon>Gammaproteobacteria</taxon>
        <taxon>Enterobacterales</taxon>
        <taxon>Erwiniaceae</taxon>
        <taxon>Buchnera</taxon>
    </lineage>
</organism>
<reference key="1">
    <citation type="journal article" date="2009" name="Science">
        <title>The dynamics and time scale of ongoing genomic erosion in symbiotic bacteria.</title>
        <authorList>
            <person name="Moran N.A."/>
            <person name="McLaughlin H.J."/>
            <person name="Sorek R."/>
        </authorList>
    </citation>
    <scope>NUCLEOTIDE SEQUENCE [LARGE SCALE GENOMIC DNA]</scope>
    <source>
        <strain>Tuc7</strain>
    </source>
</reference>
<evidence type="ECO:0000255" key="1">
    <source>
        <dbReference type="HAMAP-Rule" id="MF_00821"/>
    </source>
</evidence>
<sequence>MLEEKKKQESFEIQRIYIKDVSFEAPNTPNIFHVNWIPTIKLNLNTTTKKIKENIFEVVLMVKVTVKIKEDLVFLCDIDQAGIFFIANINEKRLKHCLYSYCPNILFPYARTCISNLVSCGSFPQMNLAPINFDALYHDHIK</sequence>
<accession>B8D6W5</accession>
<dbReference type="EMBL" id="CP001158">
    <property type="protein sequence ID" value="ACL29880.1"/>
    <property type="molecule type" value="Genomic_DNA"/>
</dbReference>
<dbReference type="RefSeq" id="WP_009874010.1">
    <property type="nucleotide sequence ID" value="NC_011834.1"/>
</dbReference>
<dbReference type="SMR" id="B8D6W5"/>
<dbReference type="KEGG" id="bau:BUAPTUC7_053"/>
<dbReference type="HOGENOM" id="CLU_111574_1_0_6"/>
<dbReference type="GO" id="GO:0005737">
    <property type="term" value="C:cytoplasm"/>
    <property type="evidence" value="ECO:0007669"/>
    <property type="project" value="UniProtKB-SubCell"/>
</dbReference>
<dbReference type="GO" id="GO:0051082">
    <property type="term" value="F:unfolded protein binding"/>
    <property type="evidence" value="ECO:0007669"/>
    <property type="project" value="InterPro"/>
</dbReference>
<dbReference type="GO" id="GO:0006457">
    <property type="term" value="P:protein folding"/>
    <property type="evidence" value="ECO:0007669"/>
    <property type="project" value="UniProtKB-UniRule"/>
</dbReference>
<dbReference type="GO" id="GO:0051262">
    <property type="term" value="P:protein tetramerization"/>
    <property type="evidence" value="ECO:0007669"/>
    <property type="project" value="InterPro"/>
</dbReference>
<dbReference type="GO" id="GO:0015031">
    <property type="term" value="P:protein transport"/>
    <property type="evidence" value="ECO:0007669"/>
    <property type="project" value="UniProtKB-UniRule"/>
</dbReference>
<dbReference type="Gene3D" id="3.10.420.10">
    <property type="entry name" value="SecB-like"/>
    <property type="match status" value="1"/>
</dbReference>
<dbReference type="HAMAP" id="MF_00821">
    <property type="entry name" value="SecB"/>
    <property type="match status" value="1"/>
</dbReference>
<dbReference type="InterPro" id="IPR003708">
    <property type="entry name" value="SecB"/>
</dbReference>
<dbReference type="InterPro" id="IPR035958">
    <property type="entry name" value="SecB-like_sf"/>
</dbReference>
<dbReference type="NCBIfam" id="NF004393">
    <property type="entry name" value="PRK05751.1-4"/>
    <property type="match status" value="1"/>
</dbReference>
<dbReference type="NCBIfam" id="TIGR00809">
    <property type="entry name" value="secB"/>
    <property type="match status" value="1"/>
</dbReference>
<dbReference type="PANTHER" id="PTHR36918">
    <property type="match status" value="1"/>
</dbReference>
<dbReference type="PANTHER" id="PTHR36918:SF1">
    <property type="entry name" value="PROTEIN-EXPORT PROTEIN SECB"/>
    <property type="match status" value="1"/>
</dbReference>
<dbReference type="Pfam" id="PF02556">
    <property type="entry name" value="SecB"/>
    <property type="match status" value="1"/>
</dbReference>
<dbReference type="PRINTS" id="PR01594">
    <property type="entry name" value="SECBCHAPRONE"/>
</dbReference>
<dbReference type="SUPFAM" id="SSF54611">
    <property type="entry name" value="SecB-like"/>
    <property type="match status" value="1"/>
</dbReference>
<proteinExistence type="inferred from homology"/>
<name>SECB_BUCAT</name>
<gene>
    <name evidence="1" type="primary">secB</name>
    <name type="ordered locus">BUAPTUC7_053</name>
</gene>
<keyword id="KW-0143">Chaperone</keyword>
<keyword id="KW-0963">Cytoplasm</keyword>
<keyword id="KW-0653">Protein transport</keyword>
<keyword id="KW-0811">Translocation</keyword>
<keyword id="KW-0813">Transport</keyword>